<protein>
    <recommendedName>
        <fullName evidence="1">Large ribosomal subunit protein bL33</fullName>
    </recommendedName>
    <alternativeName>
        <fullName evidence="2">50S ribosomal protein L33</fullName>
    </alternativeName>
</protein>
<reference key="1">
    <citation type="submission" date="2008-04" db="EMBL/GenBank/DDBJ databases">
        <title>Complete sequence of chromosome of Methylobacterium populi BJ001.</title>
        <authorList>
            <consortium name="US DOE Joint Genome Institute"/>
            <person name="Copeland A."/>
            <person name="Lucas S."/>
            <person name="Lapidus A."/>
            <person name="Glavina del Rio T."/>
            <person name="Dalin E."/>
            <person name="Tice H."/>
            <person name="Bruce D."/>
            <person name="Goodwin L."/>
            <person name="Pitluck S."/>
            <person name="Chertkov O."/>
            <person name="Brettin T."/>
            <person name="Detter J.C."/>
            <person name="Han C."/>
            <person name="Kuske C.R."/>
            <person name="Schmutz J."/>
            <person name="Larimer F."/>
            <person name="Land M."/>
            <person name="Hauser L."/>
            <person name="Kyrpides N."/>
            <person name="Mikhailova N."/>
            <person name="Marx C."/>
            <person name="Richardson P."/>
        </authorList>
    </citation>
    <scope>NUCLEOTIDE SEQUENCE [LARGE SCALE GENOMIC DNA]</scope>
    <source>
        <strain>ATCC BAA-705 / NCIMB 13946 / BJ001</strain>
    </source>
</reference>
<evidence type="ECO:0000255" key="1">
    <source>
        <dbReference type="HAMAP-Rule" id="MF_00294"/>
    </source>
</evidence>
<evidence type="ECO:0000305" key="2"/>
<feature type="chain" id="PRO_1000115139" description="Large ribosomal subunit protein bL33">
    <location>
        <begin position="1"/>
        <end position="55"/>
    </location>
</feature>
<comment type="similarity">
    <text evidence="1">Belongs to the bacterial ribosomal protein bL33 family.</text>
</comment>
<organism>
    <name type="scientific">Methylorubrum populi (strain ATCC BAA-705 / NCIMB 13946 / BJ001)</name>
    <name type="common">Methylobacterium populi</name>
    <dbReference type="NCBI Taxonomy" id="441620"/>
    <lineage>
        <taxon>Bacteria</taxon>
        <taxon>Pseudomonadati</taxon>
        <taxon>Pseudomonadota</taxon>
        <taxon>Alphaproteobacteria</taxon>
        <taxon>Hyphomicrobiales</taxon>
        <taxon>Methylobacteriaceae</taxon>
        <taxon>Methylorubrum</taxon>
    </lineage>
</organism>
<sequence>MAKAVTVKIRLVSTADTGYFYVTKKNSRTQTEKMVMKKYDPVARKHVEFKEAKIK</sequence>
<keyword id="KW-0687">Ribonucleoprotein</keyword>
<keyword id="KW-0689">Ribosomal protein</keyword>
<gene>
    <name evidence="1" type="primary">rpmG</name>
    <name type="ordered locus">Mpop_1740</name>
</gene>
<name>RL33_METPB</name>
<dbReference type="EMBL" id="CP001029">
    <property type="protein sequence ID" value="ACB79903.1"/>
    <property type="molecule type" value="Genomic_DNA"/>
</dbReference>
<dbReference type="RefSeq" id="WP_003602581.1">
    <property type="nucleotide sequence ID" value="NC_010725.1"/>
</dbReference>
<dbReference type="SMR" id="B1ZHG7"/>
<dbReference type="STRING" id="441620.Mpop_1740"/>
<dbReference type="GeneID" id="72989427"/>
<dbReference type="KEGG" id="mpo:Mpop_1740"/>
<dbReference type="eggNOG" id="COG0267">
    <property type="taxonomic scope" value="Bacteria"/>
</dbReference>
<dbReference type="HOGENOM" id="CLU_190949_1_1_5"/>
<dbReference type="OrthoDB" id="21586at2"/>
<dbReference type="Proteomes" id="UP000007136">
    <property type="component" value="Chromosome"/>
</dbReference>
<dbReference type="GO" id="GO:0022625">
    <property type="term" value="C:cytosolic large ribosomal subunit"/>
    <property type="evidence" value="ECO:0007669"/>
    <property type="project" value="TreeGrafter"/>
</dbReference>
<dbReference type="GO" id="GO:0003735">
    <property type="term" value="F:structural constituent of ribosome"/>
    <property type="evidence" value="ECO:0007669"/>
    <property type="project" value="InterPro"/>
</dbReference>
<dbReference type="GO" id="GO:0006412">
    <property type="term" value="P:translation"/>
    <property type="evidence" value="ECO:0007669"/>
    <property type="project" value="UniProtKB-UniRule"/>
</dbReference>
<dbReference type="Gene3D" id="2.20.28.120">
    <property type="entry name" value="Ribosomal protein L33"/>
    <property type="match status" value="1"/>
</dbReference>
<dbReference type="HAMAP" id="MF_00294">
    <property type="entry name" value="Ribosomal_bL33"/>
    <property type="match status" value="1"/>
</dbReference>
<dbReference type="InterPro" id="IPR001705">
    <property type="entry name" value="Ribosomal_bL33"/>
</dbReference>
<dbReference type="InterPro" id="IPR018264">
    <property type="entry name" value="Ribosomal_bL33_CS"/>
</dbReference>
<dbReference type="InterPro" id="IPR038584">
    <property type="entry name" value="Ribosomal_bL33_sf"/>
</dbReference>
<dbReference type="InterPro" id="IPR011332">
    <property type="entry name" value="Ribosomal_zn-bd"/>
</dbReference>
<dbReference type="NCBIfam" id="NF001860">
    <property type="entry name" value="PRK00595.1"/>
    <property type="match status" value="1"/>
</dbReference>
<dbReference type="NCBIfam" id="TIGR01023">
    <property type="entry name" value="rpmG_bact"/>
    <property type="match status" value="1"/>
</dbReference>
<dbReference type="PANTHER" id="PTHR15238">
    <property type="entry name" value="54S RIBOSOMAL PROTEIN L39, MITOCHONDRIAL"/>
    <property type="match status" value="1"/>
</dbReference>
<dbReference type="PANTHER" id="PTHR15238:SF1">
    <property type="entry name" value="LARGE RIBOSOMAL SUBUNIT PROTEIN BL33M"/>
    <property type="match status" value="1"/>
</dbReference>
<dbReference type="Pfam" id="PF00471">
    <property type="entry name" value="Ribosomal_L33"/>
    <property type="match status" value="1"/>
</dbReference>
<dbReference type="SUPFAM" id="SSF57829">
    <property type="entry name" value="Zn-binding ribosomal proteins"/>
    <property type="match status" value="1"/>
</dbReference>
<dbReference type="PROSITE" id="PS00582">
    <property type="entry name" value="RIBOSOMAL_L33"/>
    <property type="match status" value="1"/>
</dbReference>
<accession>B1ZHG7</accession>
<proteinExistence type="inferred from homology"/>